<accession>Q2NQU5</accession>
<dbReference type="EC" id="2.7.7.3" evidence="1"/>
<dbReference type="EMBL" id="AP008232">
    <property type="protein sequence ID" value="BAE75480.1"/>
    <property type="molecule type" value="Genomic_DNA"/>
</dbReference>
<dbReference type="RefSeq" id="WP_011412016.1">
    <property type="nucleotide sequence ID" value="NC_007712.1"/>
</dbReference>
<dbReference type="SMR" id="Q2NQU5"/>
<dbReference type="STRING" id="343509.SG2205"/>
<dbReference type="KEGG" id="sgl:SG2205"/>
<dbReference type="eggNOG" id="COG0669">
    <property type="taxonomic scope" value="Bacteria"/>
</dbReference>
<dbReference type="HOGENOM" id="CLU_100149_0_1_6"/>
<dbReference type="OrthoDB" id="9806661at2"/>
<dbReference type="BioCyc" id="SGLO343509:SGP1_RS20295-MONOMER"/>
<dbReference type="UniPathway" id="UPA00241">
    <property type="reaction ID" value="UER00355"/>
</dbReference>
<dbReference type="Proteomes" id="UP000001932">
    <property type="component" value="Chromosome"/>
</dbReference>
<dbReference type="GO" id="GO:0005737">
    <property type="term" value="C:cytoplasm"/>
    <property type="evidence" value="ECO:0007669"/>
    <property type="project" value="UniProtKB-SubCell"/>
</dbReference>
<dbReference type="GO" id="GO:0005524">
    <property type="term" value="F:ATP binding"/>
    <property type="evidence" value="ECO:0007669"/>
    <property type="project" value="UniProtKB-KW"/>
</dbReference>
<dbReference type="GO" id="GO:0004595">
    <property type="term" value="F:pantetheine-phosphate adenylyltransferase activity"/>
    <property type="evidence" value="ECO:0007669"/>
    <property type="project" value="UniProtKB-UniRule"/>
</dbReference>
<dbReference type="GO" id="GO:0015937">
    <property type="term" value="P:coenzyme A biosynthetic process"/>
    <property type="evidence" value="ECO:0007669"/>
    <property type="project" value="UniProtKB-UniRule"/>
</dbReference>
<dbReference type="CDD" id="cd02163">
    <property type="entry name" value="PPAT"/>
    <property type="match status" value="1"/>
</dbReference>
<dbReference type="FunFam" id="3.40.50.620:FF:000012">
    <property type="entry name" value="Phosphopantetheine adenylyltransferase"/>
    <property type="match status" value="1"/>
</dbReference>
<dbReference type="Gene3D" id="3.40.50.620">
    <property type="entry name" value="HUPs"/>
    <property type="match status" value="1"/>
</dbReference>
<dbReference type="HAMAP" id="MF_00151">
    <property type="entry name" value="PPAT_bact"/>
    <property type="match status" value="1"/>
</dbReference>
<dbReference type="InterPro" id="IPR004821">
    <property type="entry name" value="Cyt_trans-like"/>
</dbReference>
<dbReference type="InterPro" id="IPR001980">
    <property type="entry name" value="PPAT"/>
</dbReference>
<dbReference type="InterPro" id="IPR014729">
    <property type="entry name" value="Rossmann-like_a/b/a_fold"/>
</dbReference>
<dbReference type="NCBIfam" id="TIGR01510">
    <property type="entry name" value="coaD_prev_kdtB"/>
    <property type="match status" value="1"/>
</dbReference>
<dbReference type="NCBIfam" id="TIGR00125">
    <property type="entry name" value="cyt_tran_rel"/>
    <property type="match status" value="1"/>
</dbReference>
<dbReference type="PANTHER" id="PTHR21342">
    <property type="entry name" value="PHOSPHOPANTETHEINE ADENYLYLTRANSFERASE"/>
    <property type="match status" value="1"/>
</dbReference>
<dbReference type="PANTHER" id="PTHR21342:SF1">
    <property type="entry name" value="PHOSPHOPANTETHEINE ADENYLYLTRANSFERASE"/>
    <property type="match status" value="1"/>
</dbReference>
<dbReference type="Pfam" id="PF01467">
    <property type="entry name" value="CTP_transf_like"/>
    <property type="match status" value="1"/>
</dbReference>
<dbReference type="PRINTS" id="PR01020">
    <property type="entry name" value="LPSBIOSNTHSS"/>
</dbReference>
<dbReference type="SUPFAM" id="SSF52374">
    <property type="entry name" value="Nucleotidylyl transferase"/>
    <property type="match status" value="1"/>
</dbReference>
<comment type="function">
    <text evidence="1">Reversibly transfers an adenylyl group from ATP to 4'-phosphopantetheine, yielding dephospho-CoA (dPCoA) and pyrophosphate.</text>
</comment>
<comment type="catalytic activity">
    <reaction evidence="1">
        <text>(R)-4'-phosphopantetheine + ATP + H(+) = 3'-dephospho-CoA + diphosphate</text>
        <dbReference type="Rhea" id="RHEA:19801"/>
        <dbReference type="ChEBI" id="CHEBI:15378"/>
        <dbReference type="ChEBI" id="CHEBI:30616"/>
        <dbReference type="ChEBI" id="CHEBI:33019"/>
        <dbReference type="ChEBI" id="CHEBI:57328"/>
        <dbReference type="ChEBI" id="CHEBI:61723"/>
        <dbReference type="EC" id="2.7.7.3"/>
    </reaction>
</comment>
<comment type="cofactor">
    <cofactor evidence="1">
        <name>Mg(2+)</name>
        <dbReference type="ChEBI" id="CHEBI:18420"/>
    </cofactor>
</comment>
<comment type="pathway">
    <text evidence="1">Cofactor biosynthesis; coenzyme A biosynthesis; CoA from (R)-pantothenate: step 4/5.</text>
</comment>
<comment type="subunit">
    <text evidence="1">Homohexamer.</text>
</comment>
<comment type="subcellular location">
    <subcellularLocation>
        <location evidence="1">Cytoplasm</location>
    </subcellularLocation>
</comment>
<comment type="similarity">
    <text evidence="1">Belongs to the bacterial CoaD family.</text>
</comment>
<feature type="chain" id="PRO_1000011242" description="Phosphopantetheine adenylyltransferase">
    <location>
        <begin position="1"/>
        <end position="160"/>
    </location>
</feature>
<feature type="binding site" evidence="1">
    <location>
        <begin position="10"/>
        <end position="11"/>
    </location>
    <ligand>
        <name>ATP</name>
        <dbReference type="ChEBI" id="CHEBI:30616"/>
    </ligand>
</feature>
<feature type="binding site" evidence="1">
    <location>
        <position position="10"/>
    </location>
    <ligand>
        <name>substrate</name>
    </ligand>
</feature>
<feature type="binding site" evidence="1">
    <location>
        <position position="18"/>
    </location>
    <ligand>
        <name>ATP</name>
        <dbReference type="ChEBI" id="CHEBI:30616"/>
    </ligand>
</feature>
<feature type="binding site" evidence="1">
    <location>
        <position position="42"/>
    </location>
    <ligand>
        <name>substrate</name>
    </ligand>
</feature>
<feature type="binding site" evidence="1">
    <location>
        <position position="74"/>
    </location>
    <ligand>
        <name>substrate</name>
    </ligand>
</feature>
<feature type="binding site" evidence="1">
    <location>
        <position position="88"/>
    </location>
    <ligand>
        <name>substrate</name>
    </ligand>
</feature>
<feature type="binding site" evidence="1">
    <location>
        <begin position="89"/>
        <end position="91"/>
    </location>
    <ligand>
        <name>ATP</name>
        <dbReference type="ChEBI" id="CHEBI:30616"/>
    </ligand>
</feature>
<feature type="binding site" evidence="1">
    <location>
        <position position="99"/>
    </location>
    <ligand>
        <name>ATP</name>
        <dbReference type="ChEBI" id="CHEBI:30616"/>
    </ligand>
</feature>
<feature type="binding site" evidence="1">
    <location>
        <begin position="124"/>
        <end position="130"/>
    </location>
    <ligand>
        <name>ATP</name>
        <dbReference type="ChEBI" id="CHEBI:30616"/>
    </ligand>
</feature>
<feature type="site" description="Transition state stabilizer" evidence="1">
    <location>
        <position position="18"/>
    </location>
</feature>
<reference key="1">
    <citation type="journal article" date="2006" name="Genome Res.">
        <title>Massive genome erosion and functional adaptations provide insights into the symbiotic lifestyle of Sodalis glossinidius in the tsetse host.</title>
        <authorList>
            <person name="Toh H."/>
            <person name="Weiss B.L."/>
            <person name="Perkin S.A.H."/>
            <person name="Yamashita A."/>
            <person name="Oshima K."/>
            <person name="Hattori M."/>
            <person name="Aksoy S."/>
        </authorList>
    </citation>
    <scope>NUCLEOTIDE SEQUENCE [LARGE SCALE GENOMIC DNA]</scope>
    <source>
        <strain>morsitans</strain>
    </source>
</reference>
<keyword id="KW-0067">ATP-binding</keyword>
<keyword id="KW-0173">Coenzyme A biosynthesis</keyword>
<keyword id="KW-0963">Cytoplasm</keyword>
<keyword id="KW-0460">Magnesium</keyword>
<keyword id="KW-0547">Nucleotide-binding</keyword>
<keyword id="KW-0548">Nucleotidyltransferase</keyword>
<keyword id="KW-0808">Transferase</keyword>
<protein>
    <recommendedName>
        <fullName evidence="1">Phosphopantetheine adenylyltransferase</fullName>
        <ecNumber evidence="1">2.7.7.3</ecNumber>
    </recommendedName>
    <alternativeName>
        <fullName evidence="1">Dephospho-CoA pyrophosphorylase</fullName>
    </alternativeName>
    <alternativeName>
        <fullName evidence="1">Pantetheine-phosphate adenylyltransferase</fullName>
        <shortName evidence="1">PPAT</shortName>
    </alternativeName>
</protein>
<name>COAD_SODGM</name>
<organism>
    <name type="scientific">Sodalis glossinidius (strain morsitans)</name>
    <dbReference type="NCBI Taxonomy" id="343509"/>
    <lineage>
        <taxon>Bacteria</taxon>
        <taxon>Pseudomonadati</taxon>
        <taxon>Pseudomonadota</taxon>
        <taxon>Gammaproteobacteria</taxon>
        <taxon>Enterobacterales</taxon>
        <taxon>Bruguierivoracaceae</taxon>
        <taxon>Sodalis</taxon>
    </lineage>
</organism>
<proteinExistence type="inferred from homology"/>
<sequence>MTNKAIYPGTFDPLTNGHLDLVTRAAKMFDVVVLAIAASPSKRPLFDLNERVALATQVTAHLPNVKVTGFSDLMADFARQQQANILIRGVRAMTDVDYEMPLAKMNRHLMPALETVFMLPAEAWSYISSTLVKEVALHGGDVDHFLPAPIAKEVRARLHP</sequence>
<gene>
    <name evidence="1" type="primary">coaD</name>
    <name type="ordered locus">SG2205</name>
</gene>
<evidence type="ECO:0000255" key="1">
    <source>
        <dbReference type="HAMAP-Rule" id="MF_00151"/>
    </source>
</evidence>